<gene>
    <name type="primary">Rbbp9</name>
    <name type="synonym">Bog</name>
</gene>
<dbReference type="EC" id="3.1.-.-" evidence="1"/>
<dbReference type="EMBL" id="AF039563">
    <property type="protein sequence ID" value="AAC63497.1"/>
    <property type="status" value="ALT_FRAME"/>
    <property type="molecule type" value="mRNA"/>
</dbReference>
<dbReference type="EMBL" id="AK017606">
    <property type="status" value="NOT_ANNOTATED_CDS"/>
    <property type="molecule type" value="mRNA"/>
</dbReference>
<dbReference type="EMBL" id="BC011107">
    <property type="protein sequence ID" value="AAH11107.1"/>
    <property type="molecule type" value="mRNA"/>
</dbReference>
<dbReference type="CCDS" id="CCDS16821.1"/>
<dbReference type="RefSeq" id="NP_056569.2">
    <property type="nucleotide sequence ID" value="NM_015754.2"/>
</dbReference>
<dbReference type="SMR" id="O88851"/>
<dbReference type="BioGRID" id="205000">
    <property type="interactions" value="1"/>
</dbReference>
<dbReference type="FunCoup" id="O88851">
    <property type="interactions" value="1146"/>
</dbReference>
<dbReference type="STRING" id="10090.ENSMUSP00000028915"/>
<dbReference type="ChEMBL" id="CHEMBL3259487"/>
<dbReference type="ESTHER" id="mouse-rbbp9">
    <property type="family name" value="Hydrolase_RBBP9_YdeN"/>
</dbReference>
<dbReference type="iPTMnet" id="O88851"/>
<dbReference type="PhosphoSitePlus" id="O88851"/>
<dbReference type="SwissPalm" id="O88851"/>
<dbReference type="REPRODUCTION-2DPAGE" id="O88851"/>
<dbReference type="jPOST" id="O88851"/>
<dbReference type="PaxDb" id="10090-ENSMUSP00000028915"/>
<dbReference type="ProteomicsDB" id="253179"/>
<dbReference type="Pumba" id="O88851"/>
<dbReference type="Antibodypedia" id="9405">
    <property type="antibodies" value="328 antibodies from 28 providers"/>
</dbReference>
<dbReference type="DNASU" id="26450"/>
<dbReference type="Ensembl" id="ENSMUST00000028915.6">
    <property type="protein sequence ID" value="ENSMUSP00000028915.6"/>
    <property type="gene ID" value="ENSMUSG00000027428.10"/>
</dbReference>
<dbReference type="GeneID" id="26450"/>
<dbReference type="KEGG" id="mmu:26450"/>
<dbReference type="UCSC" id="uc008mri.1">
    <property type="organism name" value="mouse"/>
</dbReference>
<dbReference type="AGR" id="MGI:1347074"/>
<dbReference type="CTD" id="10741"/>
<dbReference type="MGI" id="MGI:1347074">
    <property type="gene designation" value="Rbbp9"/>
</dbReference>
<dbReference type="VEuPathDB" id="HostDB:ENSMUSG00000027428"/>
<dbReference type="eggNOG" id="ENOG502QVNM">
    <property type="taxonomic scope" value="Eukaryota"/>
</dbReference>
<dbReference type="GeneTree" id="ENSGT00390000014861"/>
<dbReference type="HOGENOM" id="CLU_088863_1_0_1"/>
<dbReference type="InParanoid" id="O88851"/>
<dbReference type="OMA" id="NRPWEWE"/>
<dbReference type="OrthoDB" id="2369073at2759"/>
<dbReference type="PhylomeDB" id="O88851"/>
<dbReference type="TreeFam" id="TF106470"/>
<dbReference type="BioGRID-ORCS" id="26450">
    <property type="hits" value="2 hits in 77 CRISPR screens"/>
</dbReference>
<dbReference type="ChiTaRS" id="Rbbp9">
    <property type="organism name" value="mouse"/>
</dbReference>
<dbReference type="PRO" id="PR:O88851"/>
<dbReference type="Proteomes" id="UP000000589">
    <property type="component" value="Chromosome 2"/>
</dbReference>
<dbReference type="RNAct" id="O88851">
    <property type="molecule type" value="protein"/>
</dbReference>
<dbReference type="Bgee" id="ENSMUSG00000027428">
    <property type="expression patterns" value="Expressed in vestibular epithelium and 261 other cell types or tissues"/>
</dbReference>
<dbReference type="ExpressionAtlas" id="O88851">
    <property type="expression patterns" value="baseline and differential"/>
</dbReference>
<dbReference type="GO" id="GO:0005654">
    <property type="term" value="C:nucleoplasm"/>
    <property type="evidence" value="ECO:0007669"/>
    <property type="project" value="Ensembl"/>
</dbReference>
<dbReference type="GO" id="GO:0017171">
    <property type="term" value="F:serine hydrolase activity"/>
    <property type="evidence" value="ECO:0000250"/>
    <property type="project" value="UniProtKB"/>
</dbReference>
<dbReference type="GO" id="GO:0010628">
    <property type="term" value="P:positive regulation of gene expression"/>
    <property type="evidence" value="ECO:0000314"/>
    <property type="project" value="MGI"/>
</dbReference>
<dbReference type="GO" id="GO:0009624">
    <property type="term" value="P:response to nematode"/>
    <property type="evidence" value="ECO:0000314"/>
    <property type="project" value="MGI"/>
</dbReference>
<dbReference type="GO" id="GO:0060510">
    <property type="term" value="P:type II pneumocyte differentiation"/>
    <property type="evidence" value="ECO:0000314"/>
    <property type="project" value="MGI"/>
</dbReference>
<dbReference type="FunFam" id="3.40.50.1820:FF:000113">
    <property type="entry name" value="Putative hydrolase RBBP9"/>
    <property type="match status" value="1"/>
</dbReference>
<dbReference type="Gene3D" id="3.40.50.1820">
    <property type="entry name" value="alpha/beta hydrolase"/>
    <property type="match status" value="1"/>
</dbReference>
<dbReference type="InterPro" id="IPR029058">
    <property type="entry name" value="AB_hydrolase_fold"/>
</dbReference>
<dbReference type="InterPro" id="IPR010662">
    <property type="entry name" value="Hydrolase_RBBP9/YdeN"/>
</dbReference>
<dbReference type="InterPro" id="IPR052581">
    <property type="entry name" value="RBBP9"/>
</dbReference>
<dbReference type="PANTHER" id="PTHR15394">
    <property type="entry name" value="SERINE HYDROLASE RBBP9"/>
    <property type="match status" value="1"/>
</dbReference>
<dbReference type="PANTHER" id="PTHR15394:SF3">
    <property type="entry name" value="SERINE HYDROLASE RBBP9"/>
    <property type="match status" value="1"/>
</dbReference>
<dbReference type="Pfam" id="PF06821">
    <property type="entry name" value="Ser_hydrolase"/>
    <property type="match status" value="1"/>
</dbReference>
<dbReference type="SUPFAM" id="SSF53474">
    <property type="entry name" value="alpha/beta-Hydrolases"/>
    <property type="match status" value="1"/>
</dbReference>
<sequence length="186" mass="20912">MASPNKAVIVPGNGGGDVATHGWYGWVKKGLEQIPGFQCLAKNMPDPITARESIWLPFMETELHCDEKTIIIGHSSGAIAAMRYAETHQVYALVLVSAYTSDLGDENERASGYFSRPWQWEKIKANCPHIVQFGSTDDPFLPWKEQQEVADRLDAKLYKFTDRGHFQNTEFHELISVVKSMLKGPE</sequence>
<organism>
    <name type="scientific">Mus musculus</name>
    <name type="common">Mouse</name>
    <dbReference type="NCBI Taxonomy" id="10090"/>
    <lineage>
        <taxon>Eukaryota</taxon>
        <taxon>Metazoa</taxon>
        <taxon>Chordata</taxon>
        <taxon>Craniata</taxon>
        <taxon>Vertebrata</taxon>
        <taxon>Euteleostomi</taxon>
        <taxon>Mammalia</taxon>
        <taxon>Eutheria</taxon>
        <taxon>Euarchontoglires</taxon>
        <taxon>Glires</taxon>
        <taxon>Rodentia</taxon>
        <taxon>Myomorpha</taxon>
        <taxon>Muroidea</taxon>
        <taxon>Muridae</taxon>
        <taxon>Murinae</taxon>
        <taxon>Mus</taxon>
        <taxon>Mus</taxon>
    </lineage>
</organism>
<protein>
    <recommendedName>
        <fullName evidence="1">Serine hydrolase RBBP9</fullName>
        <ecNumber evidence="1">3.1.-.-</ecNumber>
    </recommendedName>
    <alternativeName>
        <fullName evidence="2">B5T-overexpressed gene protein</fullName>
        <shortName evidence="2">Protein BOG</shortName>
    </alternativeName>
    <alternativeName>
        <fullName>Retinoblastoma-binding protein 9</fullName>
        <shortName>RBBP-9</shortName>
    </alternativeName>
</protein>
<evidence type="ECO:0000250" key="1">
    <source>
        <dbReference type="UniProtKB" id="O75884"/>
    </source>
</evidence>
<evidence type="ECO:0000250" key="2">
    <source>
        <dbReference type="UniProtKB" id="O88350"/>
    </source>
</evidence>
<evidence type="ECO:0000255" key="3"/>
<evidence type="ECO:0000269" key="4">
    <source>
    </source>
</evidence>
<evidence type="ECO:0000305" key="5"/>
<feature type="chain" id="PRO_0000097181" description="Serine hydrolase RBBP9">
    <location>
        <begin position="1"/>
        <end position="186"/>
    </location>
</feature>
<feature type="region of interest" description="Retinoblastoma protein binding" evidence="3">
    <location>
        <begin position="56"/>
        <end position="70"/>
    </location>
</feature>
<feature type="region of interest" description="Involved in binding to RB1" evidence="1">
    <location>
        <begin position="63"/>
        <end position="67"/>
    </location>
</feature>
<feature type="active site" description="Charge relay system" evidence="1">
    <location>
        <position position="75"/>
    </location>
</feature>
<feature type="active site" description="Charge relay system" evidence="1">
    <location>
        <position position="138"/>
    </location>
</feature>
<feature type="active site" description="Charge relay system" evidence="1">
    <location>
        <position position="165"/>
    </location>
</feature>
<feature type="sequence conflict" description="In Ref. 3; AAC63497." evidence="5" ref="3">
    <original>V</original>
    <variation>I</variation>
    <location>
        <position position="131"/>
    </location>
</feature>
<proteinExistence type="evidence at protein level"/>
<accession>O88851</accession>
<accession>Q9CYJ9</accession>
<keyword id="KW-0903">Direct protein sequencing</keyword>
<keyword id="KW-0378">Hydrolase</keyword>
<keyword id="KW-1185">Reference proteome</keyword>
<comment type="function">
    <text evidence="1">Serine hydrolase. Catalyzes the hydrolytic activation of amino acid ester of the antiviral prodrug valacyclovir to its corresponding active drug, acyclovir. May negatively regulate basal or autocrine TGF-beta signaling by suppressing SMAD2-SMAD3 phosphorylation. May play a role in the transformation process due to its capacity to confer resistance to the growth-inhibitory effects of TGF-beta through interaction with RB1 and the subsequent displacement of E2F1.</text>
</comment>
<comment type="catalytic activity">
    <reaction evidence="1">
        <text>valacyclovir + H2O = acyclovir + L-valine + H(+)</text>
        <dbReference type="Rhea" id="RHEA:83871"/>
        <dbReference type="ChEBI" id="CHEBI:2453"/>
        <dbReference type="ChEBI" id="CHEBI:15377"/>
        <dbReference type="ChEBI" id="CHEBI:15378"/>
        <dbReference type="ChEBI" id="CHEBI:57762"/>
        <dbReference type="ChEBI" id="CHEBI:233453"/>
    </reaction>
    <physiologicalReaction direction="left-to-right" evidence="1">
        <dbReference type="Rhea" id="RHEA:83872"/>
    </physiologicalReaction>
</comment>
<comment type="subunit">
    <text evidence="2">Interacts with RB1; the interaction disrupts RB1 binding to E2F1. Interacts with RBL1 and RBL2.</text>
</comment>
<comment type="tissue specificity">
    <text evidence="4">Expressed in spleen.</text>
</comment>
<comment type="induction">
    <text evidence="4">Following chronic low dose of ionizing radiation, expression is up-regulated in male spleen and down-regulated in female spleen (at protein level).</text>
</comment>
<comment type="similarity">
    <text evidence="5">Belongs to the RBBP9 family.</text>
</comment>
<comment type="sequence caution" evidence="5">
    <conflict type="frameshift">
        <sequence resource="EMBL-CDS" id="AAC63497"/>
    </conflict>
</comment>
<comment type="sequence caution" evidence="5">
    <conflict type="frameshift">
        <sequence resource="EMBL" id="AK017606"/>
    </conflict>
</comment>
<name>RBBP9_MOUSE</name>
<reference key="1">
    <citation type="journal article" date="2005" name="Science">
        <title>The transcriptional landscape of the mammalian genome.</title>
        <authorList>
            <person name="Carninci P."/>
            <person name="Kasukawa T."/>
            <person name="Katayama S."/>
            <person name="Gough J."/>
            <person name="Frith M.C."/>
            <person name="Maeda N."/>
            <person name="Oyama R."/>
            <person name="Ravasi T."/>
            <person name="Lenhard B."/>
            <person name="Wells C."/>
            <person name="Kodzius R."/>
            <person name="Shimokawa K."/>
            <person name="Bajic V.B."/>
            <person name="Brenner S.E."/>
            <person name="Batalov S."/>
            <person name="Forrest A.R."/>
            <person name="Zavolan M."/>
            <person name="Davis M.J."/>
            <person name="Wilming L.G."/>
            <person name="Aidinis V."/>
            <person name="Allen J.E."/>
            <person name="Ambesi-Impiombato A."/>
            <person name="Apweiler R."/>
            <person name="Aturaliya R.N."/>
            <person name="Bailey T.L."/>
            <person name="Bansal M."/>
            <person name="Baxter L."/>
            <person name="Beisel K.W."/>
            <person name="Bersano T."/>
            <person name="Bono H."/>
            <person name="Chalk A.M."/>
            <person name="Chiu K.P."/>
            <person name="Choudhary V."/>
            <person name="Christoffels A."/>
            <person name="Clutterbuck D.R."/>
            <person name="Crowe M.L."/>
            <person name="Dalla E."/>
            <person name="Dalrymple B.P."/>
            <person name="de Bono B."/>
            <person name="Della Gatta G."/>
            <person name="di Bernardo D."/>
            <person name="Down T."/>
            <person name="Engstrom P."/>
            <person name="Fagiolini M."/>
            <person name="Faulkner G."/>
            <person name="Fletcher C.F."/>
            <person name="Fukushima T."/>
            <person name="Furuno M."/>
            <person name="Futaki S."/>
            <person name="Gariboldi M."/>
            <person name="Georgii-Hemming P."/>
            <person name="Gingeras T.R."/>
            <person name="Gojobori T."/>
            <person name="Green R.E."/>
            <person name="Gustincich S."/>
            <person name="Harbers M."/>
            <person name="Hayashi Y."/>
            <person name="Hensch T.K."/>
            <person name="Hirokawa N."/>
            <person name="Hill D."/>
            <person name="Huminiecki L."/>
            <person name="Iacono M."/>
            <person name="Ikeo K."/>
            <person name="Iwama A."/>
            <person name="Ishikawa T."/>
            <person name="Jakt M."/>
            <person name="Kanapin A."/>
            <person name="Katoh M."/>
            <person name="Kawasawa Y."/>
            <person name="Kelso J."/>
            <person name="Kitamura H."/>
            <person name="Kitano H."/>
            <person name="Kollias G."/>
            <person name="Krishnan S.P."/>
            <person name="Kruger A."/>
            <person name="Kummerfeld S.K."/>
            <person name="Kurochkin I.V."/>
            <person name="Lareau L.F."/>
            <person name="Lazarevic D."/>
            <person name="Lipovich L."/>
            <person name="Liu J."/>
            <person name="Liuni S."/>
            <person name="McWilliam S."/>
            <person name="Madan Babu M."/>
            <person name="Madera M."/>
            <person name="Marchionni L."/>
            <person name="Matsuda H."/>
            <person name="Matsuzawa S."/>
            <person name="Miki H."/>
            <person name="Mignone F."/>
            <person name="Miyake S."/>
            <person name="Morris K."/>
            <person name="Mottagui-Tabar S."/>
            <person name="Mulder N."/>
            <person name="Nakano N."/>
            <person name="Nakauchi H."/>
            <person name="Ng P."/>
            <person name="Nilsson R."/>
            <person name="Nishiguchi S."/>
            <person name="Nishikawa S."/>
            <person name="Nori F."/>
            <person name="Ohara O."/>
            <person name="Okazaki Y."/>
            <person name="Orlando V."/>
            <person name="Pang K.C."/>
            <person name="Pavan W.J."/>
            <person name="Pavesi G."/>
            <person name="Pesole G."/>
            <person name="Petrovsky N."/>
            <person name="Piazza S."/>
            <person name="Reed J."/>
            <person name="Reid J.F."/>
            <person name="Ring B.Z."/>
            <person name="Ringwald M."/>
            <person name="Rost B."/>
            <person name="Ruan Y."/>
            <person name="Salzberg S.L."/>
            <person name="Sandelin A."/>
            <person name="Schneider C."/>
            <person name="Schoenbach C."/>
            <person name="Sekiguchi K."/>
            <person name="Semple C.A."/>
            <person name="Seno S."/>
            <person name="Sessa L."/>
            <person name="Sheng Y."/>
            <person name="Shibata Y."/>
            <person name="Shimada H."/>
            <person name="Shimada K."/>
            <person name="Silva D."/>
            <person name="Sinclair B."/>
            <person name="Sperling S."/>
            <person name="Stupka E."/>
            <person name="Sugiura K."/>
            <person name="Sultana R."/>
            <person name="Takenaka Y."/>
            <person name="Taki K."/>
            <person name="Tammoja K."/>
            <person name="Tan S.L."/>
            <person name="Tang S."/>
            <person name="Taylor M.S."/>
            <person name="Tegner J."/>
            <person name="Teichmann S.A."/>
            <person name="Ueda H.R."/>
            <person name="van Nimwegen E."/>
            <person name="Verardo R."/>
            <person name="Wei C.L."/>
            <person name="Yagi K."/>
            <person name="Yamanishi H."/>
            <person name="Zabarovsky E."/>
            <person name="Zhu S."/>
            <person name="Zimmer A."/>
            <person name="Hide W."/>
            <person name="Bult C."/>
            <person name="Grimmond S.M."/>
            <person name="Teasdale R.D."/>
            <person name="Liu E.T."/>
            <person name="Brusic V."/>
            <person name="Quackenbush J."/>
            <person name="Wahlestedt C."/>
            <person name="Mattick J.S."/>
            <person name="Hume D.A."/>
            <person name="Kai C."/>
            <person name="Sasaki D."/>
            <person name="Tomaru Y."/>
            <person name="Fukuda S."/>
            <person name="Kanamori-Katayama M."/>
            <person name="Suzuki M."/>
            <person name="Aoki J."/>
            <person name="Arakawa T."/>
            <person name="Iida J."/>
            <person name="Imamura K."/>
            <person name="Itoh M."/>
            <person name="Kato T."/>
            <person name="Kawaji H."/>
            <person name="Kawagashira N."/>
            <person name="Kawashima T."/>
            <person name="Kojima M."/>
            <person name="Kondo S."/>
            <person name="Konno H."/>
            <person name="Nakano K."/>
            <person name="Ninomiya N."/>
            <person name="Nishio T."/>
            <person name="Okada M."/>
            <person name="Plessy C."/>
            <person name="Shibata K."/>
            <person name="Shiraki T."/>
            <person name="Suzuki S."/>
            <person name="Tagami M."/>
            <person name="Waki K."/>
            <person name="Watahiki A."/>
            <person name="Okamura-Oho Y."/>
            <person name="Suzuki H."/>
            <person name="Kawai J."/>
            <person name="Hayashizaki Y."/>
        </authorList>
    </citation>
    <scope>NUCLEOTIDE SEQUENCE [LARGE SCALE MRNA]</scope>
    <source>
        <strain>C57BL/6J</strain>
        <tissue>Embryo</tissue>
    </source>
</reference>
<reference key="2">
    <citation type="journal article" date="2004" name="Genome Res.">
        <title>The status, quality, and expansion of the NIH full-length cDNA project: the Mammalian Gene Collection (MGC).</title>
        <authorList>
            <consortium name="The MGC Project Team"/>
        </authorList>
    </citation>
    <scope>NUCLEOTIDE SEQUENCE [LARGE SCALE MRNA]</scope>
    <source>
        <strain>Czech II</strain>
        <tissue>Mammary gland</tissue>
    </source>
</reference>
<reference key="3">
    <citation type="submission" date="1997-12" db="EMBL/GenBank/DDBJ databases">
        <authorList>
            <person name="Woitach J.T."/>
        </authorList>
    </citation>
    <scope>NUCLEOTIDE SEQUENCE [MRNA] OF 1-174</scope>
</reference>
<reference key="4">
    <citation type="submission" date="2007-03" db="UniProtKB">
        <authorList>
            <person name="Lubec G."/>
            <person name="Klug S."/>
        </authorList>
    </citation>
    <scope>PROTEIN SEQUENCE OF 164-179</scope>
    <scope>IDENTIFICATION BY MASS SPECTROMETRY</scope>
    <source>
        <tissue>Hippocampus</tissue>
    </source>
</reference>
<reference key="5">
    <citation type="journal article" date="2006" name="Carcinogenesis">
        <title>Novel retinoblastoma binding protein RBBP9 modulates sex-specific radiation responses in vivo.</title>
        <authorList>
            <person name="Cassie S."/>
            <person name="Koturbash I."/>
            <person name="Hudson D."/>
            <person name="Baker M."/>
            <person name="Ilnytskyy Y."/>
            <person name="Rodriguez-Juarez R."/>
            <person name="Weber E."/>
            <person name="Kovalchuk O."/>
        </authorList>
    </citation>
    <scope>INDUCTION</scope>
    <scope>TISSUE SPECIFICITY</scope>
</reference>
<reference key="6">
    <citation type="journal article" date="2010" name="Cell">
        <title>A tissue-specific atlas of mouse protein phosphorylation and expression.</title>
        <authorList>
            <person name="Huttlin E.L."/>
            <person name="Jedrychowski M.P."/>
            <person name="Elias J.E."/>
            <person name="Goswami T."/>
            <person name="Rad R."/>
            <person name="Beausoleil S.A."/>
            <person name="Villen J."/>
            <person name="Haas W."/>
            <person name="Sowa M.E."/>
            <person name="Gygi S.P."/>
        </authorList>
    </citation>
    <scope>IDENTIFICATION BY MASS SPECTROMETRY [LARGE SCALE ANALYSIS]</scope>
    <source>
        <tissue>Brain</tissue>
        <tissue>Brown adipose tissue</tissue>
        <tissue>Heart</tissue>
        <tissue>Kidney</tissue>
        <tissue>Liver</tissue>
        <tissue>Lung</tissue>
        <tissue>Pancreas</tissue>
        <tissue>Spleen</tissue>
        <tissue>Testis</tissue>
    </source>
</reference>